<name>DLDH_MYCTO</name>
<accession>P9WHH8</accession>
<accession>L0T3N4</accession>
<accession>O53747</accession>
<accession>P66004</accession>
<sequence>MTHYDVVVLGAGPGGYVAAIRAAQLGLSTAIVEPKYWGGVCLNVGCIPSKALLRNAELVHIFTKDAKAFGISGEVTFDYGIAYDRSRKVAEGRVAGVHFLMKKNKITEIHGYGTFADANTLLVDLNDGGTESVTFDNAIIATGSSTRLVPGTSLSANVVTYEEQILSRELPKSIIIAGAGAIGMEFGYVLKNYGVDVTIVEFLPRALPNEDADVSKEIEKQFKKLGVTILTATKVESIADGGSQVTVTVTKDGVAQELKAEKVLQAIGFAPNVEGYGLDKAGVALTDRKAIGVDDYMRTNVGHIYAIGDVNGLLQLAHVAEAQGVVAAETIAGAETLTLGDHRMLPRATFCQPNVASFGLTEQQARNEGYDVVVAKFPFTANAKAHGVGDPSGFVKLVADAKHGELLGGHLVGHDVAELLPELTLAQRWDLTASELARNVHTHPTMSEALQECFHGLVGHMINF</sequence>
<organism>
    <name type="scientific">Mycobacterium tuberculosis (strain CDC 1551 / Oshkosh)</name>
    <dbReference type="NCBI Taxonomy" id="83331"/>
    <lineage>
        <taxon>Bacteria</taxon>
        <taxon>Bacillati</taxon>
        <taxon>Actinomycetota</taxon>
        <taxon>Actinomycetes</taxon>
        <taxon>Mycobacteriales</taxon>
        <taxon>Mycobacteriaceae</taxon>
        <taxon>Mycobacterium</taxon>
        <taxon>Mycobacterium tuberculosis complex</taxon>
    </lineage>
</organism>
<comment type="function">
    <text evidence="1">Lipoamide dehydrogenase is an essential component of the alpha-ketoacid dehydrogenase complexes, namely the pyruvate dehydrogenase (PDH) complex, the branched-chain alpha-ketoacid dehydrogenase (BCKADH) complex, and likely also the 2-oxoglutarate dehydrogenase (ODH) complex. Catalyzes the reoxidation of dihydrolipoyl groups which are covalently attached to the lipoate acyltransferase components (E2) of the complexes (By similarity).</text>
</comment>
<comment type="function">
    <text evidence="1">Together with AhpC, AhpD and DlaT, Lpd constitutes an NADH-dependent peroxidase active against hydrogen and alkyl peroxides as well as serving as a peroxynitrite reductase, thus protecting the bacterium against reactive nitrogen intermediates and oxidative stress generated by the host immune system.</text>
</comment>
<comment type="function">
    <text evidence="1">Appears to be essential for Mtb pathogenesis.</text>
</comment>
<comment type="catalytic activity">
    <reaction>
        <text>N(6)-[(R)-dihydrolipoyl]-L-lysyl-[protein] + NAD(+) = N(6)-[(R)-lipoyl]-L-lysyl-[protein] + NADH + H(+)</text>
        <dbReference type="Rhea" id="RHEA:15045"/>
        <dbReference type="Rhea" id="RHEA-COMP:10474"/>
        <dbReference type="Rhea" id="RHEA-COMP:10475"/>
        <dbReference type="ChEBI" id="CHEBI:15378"/>
        <dbReference type="ChEBI" id="CHEBI:57540"/>
        <dbReference type="ChEBI" id="CHEBI:57945"/>
        <dbReference type="ChEBI" id="CHEBI:83099"/>
        <dbReference type="ChEBI" id="CHEBI:83100"/>
        <dbReference type="EC" id="1.8.1.4"/>
    </reaction>
</comment>
<comment type="cofactor">
    <cofactor evidence="1">
        <name>FAD</name>
        <dbReference type="ChEBI" id="CHEBI:57692"/>
    </cofactor>
    <text evidence="1">Binds 1 FAD per subunit.</text>
</comment>
<comment type="subunit">
    <text evidence="1">Homodimer.</text>
</comment>
<comment type="subcellular location">
    <subcellularLocation>
        <location evidence="2">Cytoplasm</location>
    </subcellularLocation>
</comment>
<comment type="miscellaneous">
    <text evidence="1">The active site is a redox-active disulfide bond.</text>
</comment>
<comment type="similarity">
    <text evidence="2">Belongs to the class-I pyridine nucleotide-disulfide oxidoreductase family.</text>
</comment>
<feature type="chain" id="PRO_0000428184" description="Dihydrolipoyl dehydrogenase">
    <location>
        <begin position="1"/>
        <end position="464"/>
    </location>
</feature>
<feature type="active site" description="Proton acceptor" evidence="1">
    <location>
        <position position="443"/>
    </location>
</feature>
<feature type="binding site" evidence="1">
    <location>
        <begin position="33"/>
        <end position="41"/>
    </location>
    <ligand>
        <name>FAD</name>
        <dbReference type="ChEBI" id="CHEBI:57692"/>
    </ligand>
</feature>
<feature type="binding site">
    <location>
        <position position="50"/>
    </location>
    <ligand>
        <name>FAD</name>
        <dbReference type="ChEBI" id="CHEBI:57692"/>
    </ligand>
</feature>
<feature type="binding site" evidence="1">
    <location>
        <position position="113"/>
    </location>
    <ligand>
        <name>FAD</name>
        <dbReference type="ChEBI" id="CHEBI:57692"/>
    </ligand>
</feature>
<feature type="binding site" evidence="1">
    <location>
        <begin position="178"/>
        <end position="182"/>
    </location>
    <ligand>
        <name>NAD(+)</name>
        <dbReference type="ChEBI" id="CHEBI:57540"/>
    </ligand>
</feature>
<feature type="binding site" evidence="1">
    <location>
        <position position="201"/>
    </location>
    <ligand>
        <name>NAD(+)</name>
        <dbReference type="ChEBI" id="CHEBI:57540"/>
    </ligand>
</feature>
<feature type="binding site" evidence="1">
    <location>
        <begin position="266"/>
        <end position="269"/>
    </location>
    <ligand>
        <name>NAD(+)</name>
        <dbReference type="ChEBI" id="CHEBI:57540"/>
    </ligand>
</feature>
<feature type="binding site" evidence="1">
    <location>
        <position position="309"/>
    </location>
    <ligand>
        <name>FAD</name>
        <dbReference type="ChEBI" id="CHEBI:57692"/>
    </ligand>
</feature>
<feature type="binding site" evidence="1">
    <location>
        <position position="317"/>
    </location>
    <ligand>
        <name>FAD</name>
        <dbReference type="ChEBI" id="CHEBI:57692"/>
    </ligand>
</feature>
<feature type="disulfide bond" description="Redox-active" evidence="1">
    <location>
        <begin position="41"/>
        <end position="46"/>
    </location>
</feature>
<protein>
    <recommendedName>
        <fullName>Dihydrolipoyl dehydrogenase</fullName>
        <shortName>LPD</shortName>
        <ecNumber>1.8.1.4</ecNumber>
    </recommendedName>
    <alternativeName>
        <fullName>Component of peroxynitrite reductase/peroxidase complex</fullName>
        <shortName>Component of PNR/P</shortName>
    </alternativeName>
    <alternativeName>
        <fullName>Dihydrolipoamide dehydrogenase</fullName>
    </alternativeName>
    <alternativeName>
        <fullName>E3 component of alpha-ketoacid dehydrogenase complexes</fullName>
    </alternativeName>
</protein>
<dbReference type="EC" id="1.8.1.4"/>
<dbReference type="EMBL" id="AE000516">
    <property type="protein sequence ID" value="AAK44702.1"/>
    <property type="molecule type" value="Genomic_DNA"/>
</dbReference>
<dbReference type="PIR" id="B70828">
    <property type="entry name" value="B70828"/>
</dbReference>
<dbReference type="SMR" id="P9WHH8"/>
<dbReference type="BindingDB" id="P9WHH8"/>
<dbReference type="KEGG" id="mtc:MT0478"/>
<dbReference type="PATRIC" id="fig|83331.31.peg.508"/>
<dbReference type="HOGENOM" id="CLU_016755_0_2_11"/>
<dbReference type="BRENDA" id="1.8.1.4">
    <property type="organism ID" value="3445"/>
</dbReference>
<dbReference type="Proteomes" id="UP000001020">
    <property type="component" value="Chromosome"/>
</dbReference>
<dbReference type="GO" id="GO:0005737">
    <property type="term" value="C:cytoplasm"/>
    <property type="evidence" value="ECO:0007669"/>
    <property type="project" value="UniProtKB-SubCell"/>
</dbReference>
<dbReference type="GO" id="GO:0016209">
    <property type="term" value="F:antioxidant activity"/>
    <property type="evidence" value="ECO:0007669"/>
    <property type="project" value="UniProtKB-KW"/>
</dbReference>
<dbReference type="GO" id="GO:0004148">
    <property type="term" value="F:dihydrolipoyl dehydrogenase (NADH) activity"/>
    <property type="evidence" value="ECO:0007669"/>
    <property type="project" value="UniProtKB-EC"/>
</dbReference>
<dbReference type="GO" id="GO:0050660">
    <property type="term" value="F:flavin adenine dinucleotide binding"/>
    <property type="evidence" value="ECO:0007669"/>
    <property type="project" value="InterPro"/>
</dbReference>
<dbReference type="GO" id="GO:0006103">
    <property type="term" value="P:2-oxoglutarate metabolic process"/>
    <property type="evidence" value="ECO:0007669"/>
    <property type="project" value="TreeGrafter"/>
</dbReference>
<dbReference type="FunFam" id="3.30.390.30:FF:000001">
    <property type="entry name" value="Dihydrolipoyl dehydrogenase"/>
    <property type="match status" value="1"/>
</dbReference>
<dbReference type="FunFam" id="3.50.50.60:FF:000212">
    <property type="entry name" value="Dihydrolipoyl dehydrogenase"/>
    <property type="match status" value="1"/>
</dbReference>
<dbReference type="Gene3D" id="3.30.390.30">
    <property type="match status" value="1"/>
</dbReference>
<dbReference type="Gene3D" id="3.50.50.60">
    <property type="entry name" value="FAD/NAD(P)-binding domain"/>
    <property type="match status" value="2"/>
</dbReference>
<dbReference type="InterPro" id="IPR050151">
    <property type="entry name" value="Class-I_Pyr_Nuc-Dis_Oxidored"/>
</dbReference>
<dbReference type="InterPro" id="IPR036188">
    <property type="entry name" value="FAD/NAD-bd_sf"/>
</dbReference>
<dbReference type="InterPro" id="IPR023753">
    <property type="entry name" value="FAD/NAD-binding_dom"/>
</dbReference>
<dbReference type="InterPro" id="IPR016156">
    <property type="entry name" value="FAD/NAD-linked_Rdtase_dimer_sf"/>
</dbReference>
<dbReference type="InterPro" id="IPR006258">
    <property type="entry name" value="Lipoamide_DH"/>
</dbReference>
<dbReference type="InterPro" id="IPR001100">
    <property type="entry name" value="Pyr_nuc-diS_OxRdtase"/>
</dbReference>
<dbReference type="InterPro" id="IPR004099">
    <property type="entry name" value="Pyr_nucl-diS_OxRdtase_dimer"/>
</dbReference>
<dbReference type="InterPro" id="IPR012999">
    <property type="entry name" value="Pyr_OxRdtase_I_AS"/>
</dbReference>
<dbReference type="NCBIfam" id="TIGR01350">
    <property type="entry name" value="lipoamide_DH"/>
    <property type="match status" value="1"/>
</dbReference>
<dbReference type="PANTHER" id="PTHR22912:SF217">
    <property type="entry name" value="DIHYDROLIPOYL DEHYDROGENASE"/>
    <property type="match status" value="1"/>
</dbReference>
<dbReference type="PANTHER" id="PTHR22912">
    <property type="entry name" value="DISULFIDE OXIDOREDUCTASE"/>
    <property type="match status" value="1"/>
</dbReference>
<dbReference type="Pfam" id="PF07992">
    <property type="entry name" value="Pyr_redox_2"/>
    <property type="match status" value="1"/>
</dbReference>
<dbReference type="Pfam" id="PF02852">
    <property type="entry name" value="Pyr_redox_dim"/>
    <property type="match status" value="1"/>
</dbReference>
<dbReference type="PIRSF" id="PIRSF000350">
    <property type="entry name" value="Mercury_reductase_MerA"/>
    <property type="match status" value="1"/>
</dbReference>
<dbReference type="PRINTS" id="PR00368">
    <property type="entry name" value="FADPNR"/>
</dbReference>
<dbReference type="PRINTS" id="PR00411">
    <property type="entry name" value="PNDRDTASEI"/>
</dbReference>
<dbReference type="SUPFAM" id="SSF51905">
    <property type="entry name" value="FAD/NAD(P)-binding domain"/>
    <property type="match status" value="1"/>
</dbReference>
<dbReference type="SUPFAM" id="SSF55424">
    <property type="entry name" value="FAD/NAD-linked reductases, dimerisation (C-terminal) domain"/>
    <property type="match status" value="1"/>
</dbReference>
<dbReference type="PROSITE" id="PS00076">
    <property type="entry name" value="PYRIDINE_REDOX_1"/>
    <property type="match status" value="1"/>
</dbReference>
<reference key="1">
    <citation type="journal article" date="2002" name="J. Bacteriol.">
        <title>Whole-genome comparison of Mycobacterium tuberculosis clinical and laboratory strains.</title>
        <authorList>
            <person name="Fleischmann R.D."/>
            <person name="Alland D."/>
            <person name="Eisen J.A."/>
            <person name="Carpenter L."/>
            <person name="White O."/>
            <person name="Peterson J.D."/>
            <person name="DeBoy R.T."/>
            <person name="Dodson R.J."/>
            <person name="Gwinn M.L."/>
            <person name="Haft D.H."/>
            <person name="Hickey E.K."/>
            <person name="Kolonay J.F."/>
            <person name="Nelson W.C."/>
            <person name="Umayam L.A."/>
            <person name="Ermolaeva M.D."/>
            <person name="Salzberg S.L."/>
            <person name="Delcher A."/>
            <person name="Utterback T.R."/>
            <person name="Weidman J.F."/>
            <person name="Khouri H.M."/>
            <person name="Gill J."/>
            <person name="Mikula A."/>
            <person name="Bishai W."/>
            <person name="Jacobs W.R. Jr."/>
            <person name="Venter J.C."/>
            <person name="Fraser C.M."/>
        </authorList>
    </citation>
    <scope>NUCLEOTIDE SEQUENCE [LARGE SCALE GENOMIC DNA]</scope>
    <source>
        <strain>CDC 1551 / Oshkosh</strain>
    </source>
</reference>
<evidence type="ECO:0000250" key="1"/>
<evidence type="ECO:0000305" key="2"/>
<proteinExistence type="inferred from homology"/>
<gene>
    <name type="primary">lpdC</name>
    <name type="synonym">lpd</name>
    <name type="ordered locus">MT0478</name>
</gene>
<keyword id="KW-0049">Antioxidant</keyword>
<keyword id="KW-0963">Cytoplasm</keyword>
<keyword id="KW-1015">Disulfide bond</keyword>
<keyword id="KW-0274">FAD</keyword>
<keyword id="KW-0285">Flavoprotein</keyword>
<keyword id="KW-0520">NAD</keyword>
<keyword id="KW-0560">Oxidoreductase</keyword>
<keyword id="KW-0676">Redox-active center</keyword>
<keyword id="KW-1185">Reference proteome</keyword>
<keyword id="KW-0843">Virulence</keyword>